<proteinExistence type="evidence at protein level"/>
<protein>
    <recommendedName>
        <fullName evidence="21">Methionine synthase</fullName>
        <shortName>MS</shortName>
        <ecNumber evidence="11 12">2.1.1.13</ecNumber>
    </recommendedName>
    <alternativeName>
        <fullName>5-methyltetrahydrofolate--homocysteine methyltransferase</fullName>
    </alternativeName>
    <alternativeName>
        <fullName>Cobalamin-dependent methionine synthase</fullName>
    </alternativeName>
    <alternativeName>
        <fullName>Vitamin-B12 dependent methionine synthase</fullName>
    </alternativeName>
</protein>
<accession>Q99707</accession>
<accession>A1L4N8</accession>
<accession>A9Z1W4</accession>
<accession>B7ZLW7</accession>
<accession>B9EGF7</accession>
<accession>Q99713</accession>
<accession>Q99723</accession>
<gene>
    <name evidence="20 24" type="primary">MTR</name>
</gene>
<evidence type="ECO:0000250" key="1">
    <source>
        <dbReference type="UniProtKB" id="P13009"/>
    </source>
</evidence>
<evidence type="ECO:0000250" key="2">
    <source>
        <dbReference type="UniProtKB" id="Q9Z2Q4"/>
    </source>
</evidence>
<evidence type="ECO:0000255" key="3">
    <source>
        <dbReference type="PROSITE-ProRule" id="PRU00333"/>
    </source>
</evidence>
<evidence type="ECO:0000255" key="4">
    <source>
        <dbReference type="PROSITE-ProRule" id="PRU00334"/>
    </source>
</evidence>
<evidence type="ECO:0000255" key="5">
    <source>
        <dbReference type="PROSITE-ProRule" id="PRU00346"/>
    </source>
</evidence>
<evidence type="ECO:0000255" key="6">
    <source>
        <dbReference type="PROSITE-ProRule" id="PRU00666"/>
    </source>
</evidence>
<evidence type="ECO:0000255" key="7">
    <source>
        <dbReference type="PROSITE-ProRule" id="PRU00667"/>
    </source>
</evidence>
<evidence type="ECO:0000269" key="8">
    <source>
    </source>
</evidence>
<evidence type="ECO:0000269" key="9">
    <source>
    </source>
</evidence>
<evidence type="ECO:0000269" key="10">
    <source>
    </source>
</evidence>
<evidence type="ECO:0000269" key="11">
    <source>
    </source>
</evidence>
<evidence type="ECO:0000269" key="12">
    <source>
    </source>
</evidence>
<evidence type="ECO:0000269" key="13">
    <source>
    </source>
</evidence>
<evidence type="ECO:0000269" key="14">
    <source>
    </source>
</evidence>
<evidence type="ECO:0000269" key="15">
    <source>
    </source>
</evidence>
<evidence type="ECO:0000269" key="16">
    <source>
    </source>
</evidence>
<evidence type="ECO:0000269" key="17">
    <source>
    </source>
</evidence>
<evidence type="ECO:0000269" key="18">
    <source ref="13"/>
</evidence>
<evidence type="ECO:0000303" key="19">
    <source>
    </source>
</evidence>
<evidence type="ECO:0000303" key="20">
    <source>
    </source>
</evidence>
<evidence type="ECO:0000303" key="21">
    <source>
    </source>
</evidence>
<evidence type="ECO:0000305" key="22"/>
<evidence type="ECO:0000305" key="23">
    <source>
    </source>
</evidence>
<evidence type="ECO:0000312" key="24">
    <source>
        <dbReference type="HGNC" id="HGNC:7468"/>
    </source>
</evidence>
<evidence type="ECO:0007744" key="25">
    <source>
        <dbReference type="PDB" id="2O2K"/>
    </source>
</evidence>
<evidence type="ECO:0007744" key="26">
    <source>
        <dbReference type="PDB" id="4CCZ"/>
    </source>
</evidence>
<evidence type="ECO:0007829" key="27">
    <source>
        <dbReference type="PDB" id="2O2K"/>
    </source>
</evidence>
<evidence type="ECO:0007829" key="28">
    <source>
        <dbReference type="PDB" id="4CCZ"/>
    </source>
</evidence>
<name>METH_HUMAN</name>
<keyword id="KW-0002">3D-structure</keyword>
<keyword id="KW-0025">Alternative splicing</keyword>
<keyword id="KW-0028">Amino-acid biosynthesis</keyword>
<keyword id="KW-0846">Cobalamin</keyword>
<keyword id="KW-0170">Cobalt</keyword>
<keyword id="KW-0963">Cytoplasm</keyword>
<keyword id="KW-0225">Disease variant</keyword>
<keyword id="KW-0479">Metal-binding</keyword>
<keyword id="KW-0486">Methionine biosynthesis</keyword>
<keyword id="KW-0489">Methyltransferase</keyword>
<keyword id="KW-0597">Phosphoprotein</keyword>
<keyword id="KW-1267">Proteomics identification</keyword>
<keyword id="KW-1185">Reference proteome</keyword>
<keyword id="KW-0677">Repeat</keyword>
<keyword id="KW-0949">S-adenosyl-L-methionine</keyword>
<keyword id="KW-0808">Transferase</keyword>
<keyword id="KW-0862">Zinc</keyword>
<comment type="function">
    <text evidence="11 12 13">Catalyzes the transfer of a methyl group from methylcob(III)alamin (MeCbl) to homocysteine, yielding enzyme-bound cob(I)alamin and methionine in the cytosol (PubMed:16769880, PubMed:17288554, PubMed:27771510). MeCbl is an active form of cobalamin (vitamin B12) used as a cofactor for methionine biosynthesis. Cob(I)alamin form is regenerated to MeCbl by a transfer of a methyl group from 5-methyltetrahydrofolate (PubMed:16769880, PubMed:17288554, PubMed:27771510). The processing of cobalamin in the cytosol occurs in a multiprotein complex composed of at least MMACHC, MMADHC, MTRR (methionine synthase reductase) and MTR which may contribute to shuttle safely and efficiently cobalamin towards MTR in order to produce methionine (PubMed:16769880, PubMed:27771510).</text>
</comment>
<comment type="catalytic activity">
    <reaction evidence="11 12">
        <text>(6S)-5-methyl-5,6,7,8-tetrahydrofolate + L-homocysteine = (6S)-5,6,7,8-tetrahydrofolate + L-methionine</text>
        <dbReference type="Rhea" id="RHEA:11172"/>
        <dbReference type="ChEBI" id="CHEBI:18608"/>
        <dbReference type="ChEBI" id="CHEBI:57453"/>
        <dbReference type="ChEBI" id="CHEBI:57844"/>
        <dbReference type="ChEBI" id="CHEBI:58199"/>
        <dbReference type="EC" id="2.1.1.13"/>
    </reaction>
    <physiologicalReaction direction="left-to-right" evidence="11 12">
        <dbReference type="Rhea" id="RHEA:11173"/>
    </physiologicalReaction>
</comment>
<comment type="cofactor">
    <cofactor evidence="1">
        <name>methylcob(III)alamin</name>
        <dbReference type="ChEBI" id="CHEBI:28115"/>
    </cofactor>
</comment>
<comment type="cofactor">
    <cofactor evidence="1">
        <name>Zn(2+)</name>
        <dbReference type="ChEBI" id="CHEBI:29105"/>
    </cofactor>
    <text evidence="1">Binds 1 zinc ion per subunit.</text>
</comment>
<comment type="pathway">
    <text evidence="13">Amino-acid biosynthesis; L-methionine biosynthesis via de novo pathway; L-methionine from L-homocysteine (MetH route): step 1/1.</text>
</comment>
<comment type="subunit">
    <text evidence="11 12 13">Monomer (PubMed:17288554). Dimer (PubMed:17288554). Forms a multiprotein complex with MMACHC, MMADHC and MTRR (PubMed:16769880, PubMed:17288554, PubMed:27771510).</text>
</comment>
<comment type="interaction">
    <interactant intactId="EBI-1045782">
        <id>Q99707</id>
    </interactant>
    <interactant intactId="EBI-9775184">
        <id>Q9Y4U1</id>
        <label>MMACHC</label>
    </interactant>
    <organismsDiffer>false</organismsDiffer>
    <experiments>3</experiments>
</comment>
<comment type="subcellular location">
    <subcellularLocation>
        <location evidence="23">Cytoplasm</location>
    </subcellularLocation>
</comment>
<comment type="alternative products">
    <event type="alternative splicing"/>
    <isoform>
        <id>Q99707-1</id>
        <name>1</name>
        <sequence type="displayed"/>
    </isoform>
    <isoform>
        <id>Q99707-2</id>
        <name>2</name>
        <sequence type="described" ref="VSP_057283"/>
    </isoform>
</comment>
<comment type="tissue specificity">
    <text evidence="14 16">Widely expressed. Expressed at the highest levels in pancreas, heart, brain, skeletal muscle and placenta (PubMed:8968735, PubMed:8968737). Expressed at lower levels in lung, liver and kidney (PubMed:8968735, PubMed:8968737).</text>
</comment>
<comment type="domain">
    <text evidence="1">Modular enzyme with four functionally distinct domains. The isolated Hcy-binding domain catalyzes methyl transfer from free methylcobalamin to homocysteine. The Hcy-binding domain in association with the pterin-binding domain catalyzes the methylation of cob(I)alamin by methyltetrahydrofolate and the methylation of homocysteine. The B12-binding domain binds the cofactor. The AdoMet activation domain binds S-adenosyl-L-methionine. Under aerobic conditions cob(I)alamin can be converted to inactive cob(II)alamin. Reductive methylation by S-adenosyl-L-methionine and flavodoxin regenerates methylcobalamin (By similarity).</text>
</comment>
<comment type="disease" evidence="15 16">
    <disease id="DI-01971">
        <name>Homocystinuria-megaloblastic anemia, cblG type</name>
        <acronym>HMAG</acronym>
        <description>An autosomal recessive inborn error of metabolism resulting from defects in the cobalamin-dependent pathway that converts homocysteine to methionine. It causes delayed psychomotor development, megaloblastic anemia, homocystinuria, and hypomethioninemia.</description>
        <dbReference type="MIM" id="250940"/>
    </disease>
    <text>The disease is caused by variants affecting the gene represented in this entry.</text>
</comment>
<comment type="disease" evidence="8">
    <disease id="DI-01623">
        <name>Neural tube defects, folate-sensitive</name>
        <acronym>NTDFS</acronym>
        <description>The most common NTDs are open spina bifida (myelomeningocele) and anencephaly.</description>
        <dbReference type="MIM" id="601634"/>
    </disease>
    <text>Disease susceptibility is associated with variants affecting the gene represented in this entry.</text>
</comment>
<comment type="similarity">
    <text evidence="22">Belongs to the vitamin-B12 dependent methionine synthase family.</text>
</comment>
<comment type="online information" name="Wikipedia">
    <link uri="https://en.wikipedia.org/wiki/5-Methyltetrahydrofolate-homocysteine_methyltransferase"/>
    <text>5-methyltetrahydrofolate-homocysteine methyltransferase entry</text>
</comment>
<sequence length="1265" mass="140527">MSPALQDLSQPEGLKKTLRDEINAILQKRIMVLDGGMGTMIQREKLNEEHFRGQEFKDHARPLKGNNDILSITQPDVIYQIHKEYLLAGADIIETNTFSSTSIAQADYGLEHLAYRMNMCSAGVARKAAEEVTLQTGIKRFVAGALGPTNKTLSVSPSVERPDYRNITFDELVEAYQEQAKGLLDGGVDILLIETIFDTANAKAALFALQNLFEEKYAPRPIFISGTIVDKSGRTLSGQTGEGFVISVSHGEPLCIGLNCALGAAEMRPFIEIIGKCTTAYVLCYPNAGLPNTFGDYDETPSMMAKHLKDFAMDGLVNIVGGCCGSTPDHIREIAEAVKNCKPRVPPATAFEGHMLLSGLEPFRIGPYTNFVNIGERCNVAGSRKFAKLIMAGNYEEALCVAKVQVEMGAQVLDVNMDDGMLDGPSAMTRFCNLIASEPDIAKVPLCIDSSNFAVIEAGLKCCQGKCIVNSISLKEGEDDFLEKARKIKKYGAAMVVMAFDEEGQATETDTKIRVCTRAYHLLVKKLGFNPNDIIFDPNILTIGTGMEEHNLYAINFIHATKVIKETLPGARISGGLSNLSFSFRGMEAIREAMHGVFLYHAIKSGMDMGIVNAGNLPVYDDIHKELLQLCEDLIWNKDPEATEKLLRYAQTQGTGGKKVIQTDEWRNGPVEERLEYALVKGIEKHIIEDTEEARLNQKKYPRPLNIIEGPLMNGMKIVGDLFGAGKMFLPQVIKSARVMKKAVGHLIPFMEKEREETRVLNGTVEEEDPYQGTIVLATVKGDVHDIGKNIVGVVLGCNNFRVIDLGVMTPCDKILKAALDHKADIIGLSGLITPSLDEMIFVAKEMERLAIRIPLLIGGATTSKTHTAVKIAPRYSAPVIHVLDASKSVVVCSQLLDENLKDEYFEEIMEEYEDIRQDHYESLKERRYLPLSQARKSGFQMDWLSEPHPVKPTFIGTQVFEDYDLQKLVDYIDWKPFFDVWQLRGKYPNRGFPKIFNDKTVGGEARKVYDDAHNMLNTLISQKKLRARGVVGFWPAQSIQDDIHLYAEAAVPQAAEPIATFYGLRQQAEKDSASTEPYYCLSDFIAPLHSGIRDYLGLFAVACFGVEELSKAYEDDGDDYSSIMVKALGDRLAEAFAEELHERVRRELWAYCGSEQLDVADLRRLRYKGIRPAPGYPSQPDHTEKLTMWRLADIEQSTGIRLTESLAMAPASAVSGLYFSNLKSKYFAVGKISKDQVEDYALRKNISVAEVEKWLGPILGYDTD</sequence>
<dbReference type="EC" id="2.1.1.13" evidence="11 12"/>
<dbReference type="EMBL" id="U71285">
    <property type="protein sequence ID" value="AAC51188.1"/>
    <property type="molecule type" value="mRNA"/>
</dbReference>
<dbReference type="EMBL" id="U75743">
    <property type="protein sequence ID" value="AAB58906.1"/>
    <property type="molecule type" value="mRNA"/>
</dbReference>
<dbReference type="EMBL" id="U73338">
    <property type="protein sequence ID" value="AAB39704.1"/>
    <property type="molecule type" value="mRNA"/>
</dbReference>
<dbReference type="EMBL" id="AL359185">
    <property type="status" value="NOT_ANNOTATED_CDS"/>
    <property type="molecule type" value="Genomic_DNA"/>
</dbReference>
<dbReference type="EMBL" id="AL359259">
    <property type="status" value="NOT_ANNOTATED_CDS"/>
    <property type="molecule type" value="Genomic_DNA"/>
</dbReference>
<dbReference type="EMBL" id="CH471098">
    <property type="protein sequence ID" value="EAW70066.1"/>
    <property type="molecule type" value="Genomic_DNA"/>
</dbReference>
<dbReference type="EMBL" id="BC130616">
    <property type="protein sequence ID" value="AAI30617.1"/>
    <property type="molecule type" value="mRNA"/>
</dbReference>
<dbReference type="EMBL" id="BC136440">
    <property type="protein sequence ID" value="AAI36441.1"/>
    <property type="molecule type" value="mRNA"/>
</dbReference>
<dbReference type="EMBL" id="BC144095">
    <property type="protein sequence ID" value="AAI44096.1"/>
    <property type="molecule type" value="mRNA"/>
</dbReference>
<dbReference type="CCDS" id="CCDS1614.1">
    <molecule id="Q99707-1"/>
</dbReference>
<dbReference type="CCDS" id="CCDS73054.1">
    <molecule id="Q99707-2"/>
</dbReference>
<dbReference type="RefSeq" id="NP_000245.2">
    <molecule id="Q99707-1"/>
    <property type="nucleotide sequence ID" value="NM_000254.3"/>
</dbReference>
<dbReference type="RefSeq" id="NP_001278868.1">
    <molecule id="Q99707-2"/>
    <property type="nucleotide sequence ID" value="NM_001291939.1"/>
</dbReference>
<dbReference type="RefSeq" id="NP_001278869.1">
    <property type="nucleotide sequence ID" value="NM_001291940.1"/>
</dbReference>
<dbReference type="PDB" id="2O2K">
    <property type="method" value="X-ray"/>
    <property type="resolution" value="1.60 A"/>
    <property type="chains" value="A/B=925-1265"/>
</dbReference>
<dbReference type="PDB" id="4CCZ">
    <property type="method" value="X-ray"/>
    <property type="resolution" value="2.70 A"/>
    <property type="chains" value="A=16-657"/>
</dbReference>
<dbReference type="PDBsum" id="2O2K"/>
<dbReference type="PDBsum" id="4CCZ"/>
<dbReference type="SMR" id="Q99707"/>
<dbReference type="BioGRID" id="110642">
    <property type="interactions" value="153"/>
</dbReference>
<dbReference type="DIP" id="DIP-40306N"/>
<dbReference type="FunCoup" id="Q99707">
    <property type="interactions" value="1106"/>
</dbReference>
<dbReference type="IntAct" id="Q99707">
    <property type="interactions" value="76"/>
</dbReference>
<dbReference type="MINT" id="Q99707"/>
<dbReference type="STRING" id="9606.ENSP00000355536"/>
<dbReference type="BindingDB" id="Q99707"/>
<dbReference type="ChEMBL" id="CHEMBL2150844"/>
<dbReference type="DrugBank" id="DB00115">
    <property type="generic name" value="Cyanocobalamin"/>
</dbReference>
<dbReference type="DrugBank" id="DB00200">
    <property type="generic name" value="Hydroxocobalamin"/>
</dbReference>
<dbReference type="DrugBank" id="DB11256">
    <property type="generic name" value="Levomefolic acid"/>
</dbReference>
<dbReference type="DrugBank" id="DB03614">
    <property type="generic name" value="Mecobalamin"/>
</dbReference>
<dbReference type="DrugBank" id="DB00134">
    <property type="generic name" value="Methionine"/>
</dbReference>
<dbReference type="DrugBank" id="DB00116">
    <property type="generic name" value="Tetrahydrofolic acid"/>
</dbReference>
<dbReference type="DrugBank" id="DB11590">
    <property type="generic name" value="Thimerosal"/>
</dbReference>
<dbReference type="DrugCentral" id="Q99707"/>
<dbReference type="GlyCosmos" id="Q99707">
    <property type="glycosylation" value="1 site, 1 glycan"/>
</dbReference>
<dbReference type="GlyGen" id="Q99707">
    <property type="glycosylation" value="3 sites, 1 N-linked glycan (2 sites), 1 O-linked glycan (1 site)"/>
</dbReference>
<dbReference type="iPTMnet" id="Q99707"/>
<dbReference type="PhosphoSitePlus" id="Q99707"/>
<dbReference type="BioMuta" id="MTR"/>
<dbReference type="DMDM" id="2842762"/>
<dbReference type="jPOST" id="Q99707"/>
<dbReference type="MassIVE" id="Q99707"/>
<dbReference type="PaxDb" id="9606-ENSP00000355536"/>
<dbReference type="PeptideAtlas" id="Q99707"/>
<dbReference type="ProteomicsDB" id="7238"/>
<dbReference type="ProteomicsDB" id="78423">
    <molecule id="Q99707-1"/>
</dbReference>
<dbReference type="Pumba" id="Q99707"/>
<dbReference type="Antibodypedia" id="20817">
    <property type="antibodies" value="148 antibodies from 29 providers"/>
</dbReference>
<dbReference type="DNASU" id="4548"/>
<dbReference type="Ensembl" id="ENST00000366577.10">
    <molecule id="Q99707-1"/>
    <property type="protein sequence ID" value="ENSP00000355536.5"/>
    <property type="gene ID" value="ENSG00000116984.15"/>
</dbReference>
<dbReference type="Ensembl" id="ENST00000535889.6">
    <molecule id="Q99707-2"/>
    <property type="protein sequence ID" value="ENSP00000441845.1"/>
    <property type="gene ID" value="ENSG00000116984.15"/>
</dbReference>
<dbReference type="GeneID" id="4548"/>
<dbReference type="KEGG" id="hsa:4548"/>
<dbReference type="MANE-Select" id="ENST00000366577.10">
    <property type="protein sequence ID" value="ENSP00000355536.5"/>
    <property type="RefSeq nucleotide sequence ID" value="NM_000254.3"/>
    <property type="RefSeq protein sequence ID" value="NP_000245.2"/>
</dbReference>
<dbReference type="UCSC" id="uc001hyi.5">
    <molecule id="Q99707-1"/>
    <property type="organism name" value="human"/>
</dbReference>
<dbReference type="AGR" id="HGNC:7468"/>
<dbReference type="CTD" id="4548"/>
<dbReference type="DisGeNET" id="4548"/>
<dbReference type="GeneCards" id="MTR"/>
<dbReference type="GeneReviews" id="MTR"/>
<dbReference type="HGNC" id="HGNC:7468">
    <property type="gene designation" value="MTR"/>
</dbReference>
<dbReference type="HPA" id="ENSG00000116984">
    <property type="expression patterns" value="Low tissue specificity"/>
</dbReference>
<dbReference type="MalaCards" id="MTR"/>
<dbReference type="MIM" id="156570">
    <property type="type" value="gene"/>
</dbReference>
<dbReference type="MIM" id="250940">
    <property type="type" value="phenotype"/>
</dbReference>
<dbReference type="MIM" id="601634">
    <property type="type" value="phenotype"/>
</dbReference>
<dbReference type="MIM" id="603174">
    <property type="type" value="phenotype"/>
</dbReference>
<dbReference type="neXtProt" id="NX_Q99707"/>
<dbReference type="OpenTargets" id="ENSG00000116984"/>
<dbReference type="Orphanet" id="2170">
    <property type="disease" value="Methylcobalamin deficiency type cblG"/>
</dbReference>
<dbReference type="PharmGKB" id="PA31272"/>
<dbReference type="VEuPathDB" id="HostDB:ENSG00000116984"/>
<dbReference type="eggNOG" id="KOG1579">
    <property type="taxonomic scope" value="Eukaryota"/>
</dbReference>
<dbReference type="GeneTree" id="ENSGT00420000029824"/>
<dbReference type="HOGENOM" id="CLU_004914_1_0_1"/>
<dbReference type="InParanoid" id="Q99707"/>
<dbReference type="OMA" id="ADCIAMS"/>
<dbReference type="OrthoDB" id="261426at2759"/>
<dbReference type="PAN-GO" id="Q99707">
    <property type="GO annotations" value="3 GO annotations based on evolutionary models"/>
</dbReference>
<dbReference type="PhylomeDB" id="Q99707"/>
<dbReference type="TreeFam" id="TF312829"/>
<dbReference type="BioCyc" id="MetaCyc:HS04076-MONOMER"/>
<dbReference type="BRENDA" id="2.1.1.13">
    <property type="organism ID" value="2681"/>
</dbReference>
<dbReference type="PathwayCommons" id="Q99707"/>
<dbReference type="Reactome" id="R-HSA-156581">
    <property type="pathway name" value="Methylation"/>
</dbReference>
<dbReference type="Reactome" id="R-HSA-1614635">
    <property type="pathway name" value="Sulfur amino acid metabolism"/>
</dbReference>
<dbReference type="Reactome" id="R-HSA-3359467">
    <property type="pathway name" value="Defective MTRR causes HMAE"/>
</dbReference>
<dbReference type="Reactome" id="R-HSA-3359469">
    <property type="pathway name" value="Defective MTR causes HMAG"/>
</dbReference>
<dbReference type="Reactome" id="R-HSA-9013407">
    <property type="pathway name" value="RHOH GTPase cycle"/>
</dbReference>
<dbReference type="Reactome" id="R-HSA-9759218">
    <property type="pathway name" value="Cobalamin (Cbl) metabolism"/>
</dbReference>
<dbReference type="SignaLink" id="Q99707"/>
<dbReference type="SIGNOR" id="Q99707"/>
<dbReference type="UniPathway" id="UPA00051">
    <property type="reaction ID" value="UER00081"/>
</dbReference>
<dbReference type="BioGRID-ORCS" id="4548">
    <property type="hits" value="46 hits in 1169 CRISPR screens"/>
</dbReference>
<dbReference type="ChiTaRS" id="MTR">
    <property type="organism name" value="human"/>
</dbReference>
<dbReference type="EvolutionaryTrace" id="Q99707"/>
<dbReference type="GeneWiki" id="Methionine_synthase"/>
<dbReference type="GenomeRNAi" id="4548"/>
<dbReference type="Pharos" id="Q99707">
    <property type="development level" value="Tbio"/>
</dbReference>
<dbReference type="PRO" id="PR:Q99707"/>
<dbReference type="Proteomes" id="UP000005640">
    <property type="component" value="Chromosome 1"/>
</dbReference>
<dbReference type="RNAct" id="Q99707">
    <property type="molecule type" value="protein"/>
</dbReference>
<dbReference type="Bgee" id="ENSG00000116984">
    <property type="expression patterns" value="Expressed in caput epididymis and 216 other cell types or tissues"/>
</dbReference>
<dbReference type="ExpressionAtlas" id="Q99707">
    <property type="expression patterns" value="baseline and differential"/>
</dbReference>
<dbReference type="GO" id="GO:0005829">
    <property type="term" value="C:cytosol"/>
    <property type="evidence" value="ECO:0000318"/>
    <property type="project" value="GO_Central"/>
</dbReference>
<dbReference type="GO" id="GO:0031419">
    <property type="term" value="F:cobalamin binding"/>
    <property type="evidence" value="ECO:0007669"/>
    <property type="project" value="UniProtKB-KW"/>
</dbReference>
<dbReference type="GO" id="GO:0008705">
    <property type="term" value="F:methionine synthase activity"/>
    <property type="evidence" value="ECO:0000314"/>
    <property type="project" value="CACAO"/>
</dbReference>
<dbReference type="GO" id="GO:0008270">
    <property type="term" value="F:zinc ion binding"/>
    <property type="evidence" value="ECO:0007669"/>
    <property type="project" value="InterPro"/>
</dbReference>
<dbReference type="GO" id="GO:0031103">
    <property type="term" value="P:axon regeneration"/>
    <property type="evidence" value="ECO:0000250"/>
    <property type="project" value="BHF-UCL"/>
</dbReference>
<dbReference type="GO" id="GO:0071732">
    <property type="term" value="P:cellular response to nitric oxide"/>
    <property type="evidence" value="ECO:0000250"/>
    <property type="project" value="BHF-UCL"/>
</dbReference>
<dbReference type="GO" id="GO:0009235">
    <property type="term" value="P:cobalamin metabolic process"/>
    <property type="evidence" value="ECO:0000315"/>
    <property type="project" value="BHF-UCL"/>
</dbReference>
<dbReference type="GO" id="GO:0050667">
    <property type="term" value="P:homocysteine metabolic process"/>
    <property type="evidence" value="ECO:0000318"/>
    <property type="project" value="GO_Central"/>
</dbReference>
<dbReference type="GO" id="GO:0009086">
    <property type="term" value="P:methionine biosynthetic process"/>
    <property type="evidence" value="ECO:0000315"/>
    <property type="project" value="BHF-UCL"/>
</dbReference>
<dbReference type="GO" id="GO:0032259">
    <property type="term" value="P:methylation"/>
    <property type="evidence" value="ECO:0000304"/>
    <property type="project" value="Reactome"/>
</dbReference>
<dbReference type="GO" id="GO:0007399">
    <property type="term" value="P:nervous system development"/>
    <property type="evidence" value="ECO:0000304"/>
    <property type="project" value="ProtInc"/>
</dbReference>
<dbReference type="GO" id="GO:0048678">
    <property type="term" value="P:response to axon injury"/>
    <property type="evidence" value="ECO:0000250"/>
    <property type="project" value="BHF-UCL"/>
</dbReference>
<dbReference type="GO" id="GO:0000096">
    <property type="term" value="P:sulfur amino acid metabolic process"/>
    <property type="evidence" value="ECO:0000304"/>
    <property type="project" value="Reactome"/>
</dbReference>
<dbReference type="GO" id="GO:0046653">
    <property type="term" value="P:tetrahydrofolate metabolic process"/>
    <property type="evidence" value="ECO:0000318"/>
    <property type="project" value="GO_Central"/>
</dbReference>
<dbReference type="CDD" id="cd02069">
    <property type="entry name" value="methionine_synthase_B12_BD"/>
    <property type="match status" value="1"/>
</dbReference>
<dbReference type="CDD" id="cd00740">
    <property type="entry name" value="MeTr"/>
    <property type="match status" value="1"/>
</dbReference>
<dbReference type="FunFam" id="1.10.1240.10:FF:000001">
    <property type="entry name" value="Methionine synthase"/>
    <property type="match status" value="1"/>
</dbReference>
<dbReference type="FunFam" id="3.20.20.20:FF:000002">
    <property type="entry name" value="Methionine synthase"/>
    <property type="match status" value="1"/>
</dbReference>
<dbReference type="FunFam" id="3.20.20.330:FF:000001">
    <property type="entry name" value="Methionine synthase"/>
    <property type="match status" value="1"/>
</dbReference>
<dbReference type="FunFam" id="3.40.50.280:FF:000001">
    <property type="entry name" value="Methionine synthase"/>
    <property type="match status" value="1"/>
</dbReference>
<dbReference type="Gene3D" id="3.40.50.280">
    <property type="entry name" value="Cobalamin-binding domain"/>
    <property type="match status" value="1"/>
</dbReference>
<dbReference type="Gene3D" id="1.10.288.10">
    <property type="entry name" value="Cobalamin-dependent Methionine Synthase, domain 2"/>
    <property type="match status" value="1"/>
</dbReference>
<dbReference type="Gene3D" id="3.20.20.20">
    <property type="entry name" value="Dihydropteroate synthase-like"/>
    <property type="match status" value="1"/>
</dbReference>
<dbReference type="Gene3D" id="3.20.20.330">
    <property type="entry name" value="Homocysteine-binding-like domain"/>
    <property type="match status" value="1"/>
</dbReference>
<dbReference type="Gene3D" id="1.10.1240.10">
    <property type="entry name" value="Methionine synthase domain"/>
    <property type="match status" value="1"/>
</dbReference>
<dbReference type="Gene3D" id="3.10.196.10">
    <property type="entry name" value="Vitamin B12-dependent methionine synthase, activation domain"/>
    <property type="match status" value="1"/>
</dbReference>
<dbReference type="InterPro" id="IPR003759">
    <property type="entry name" value="Cbl-bd_cap"/>
</dbReference>
<dbReference type="InterPro" id="IPR006158">
    <property type="entry name" value="Cobalamin-bd"/>
</dbReference>
<dbReference type="InterPro" id="IPR036724">
    <property type="entry name" value="Cobalamin-bd_sf"/>
</dbReference>
<dbReference type="InterPro" id="IPR011005">
    <property type="entry name" value="Dihydropteroate_synth-like_sf"/>
</dbReference>
<dbReference type="InterPro" id="IPR003726">
    <property type="entry name" value="HCY_dom"/>
</dbReference>
<dbReference type="InterPro" id="IPR036589">
    <property type="entry name" value="HCY_dom_sf"/>
</dbReference>
<dbReference type="InterPro" id="IPR050554">
    <property type="entry name" value="Met_Synthase/Corrinoid"/>
</dbReference>
<dbReference type="InterPro" id="IPR033706">
    <property type="entry name" value="Met_synthase_B12-bd"/>
</dbReference>
<dbReference type="InterPro" id="IPR011822">
    <property type="entry name" value="MetH"/>
</dbReference>
<dbReference type="InterPro" id="IPR036594">
    <property type="entry name" value="Meth_synthase_dom"/>
</dbReference>
<dbReference type="InterPro" id="IPR000489">
    <property type="entry name" value="Pterin-binding_dom"/>
</dbReference>
<dbReference type="InterPro" id="IPR004223">
    <property type="entry name" value="VitB12-dep_Met_synth_activ_dom"/>
</dbReference>
<dbReference type="InterPro" id="IPR037010">
    <property type="entry name" value="VitB12-dep_Met_synth_activ_sf"/>
</dbReference>
<dbReference type="NCBIfam" id="TIGR02082">
    <property type="entry name" value="metH"/>
    <property type="match status" value="1"/>
</dbReference>
<dbReference type="NCBIfam" id="NF007024">
    <property type="entry name" value="PRK09490.1"/>
    <property type="match status" value="1"/>
</dbReference>
<dbReference type="PANTHER" id="PTHR45833">
    <property type="entry name" value="METHIONINE SYNTHASE"/>
    <property type="match status" value="1"/>
</dbReference>
<dbReference type="PANTHER" id="PTHR45833:SF1">
    <property type="entry name" value="METHIONINE SYNTHASE"/>
    <property type="match status" value="1"/>
</dbReference>
<dbReference type="Pfam" id="PF02310">
    <property type="entry name" value="B12-binding"/>
    <property type="match status" value="1"/>
</dbReference>
<dbReference type="Pfam" id="PF02607">
    <property type="entry name" value="B12-binding_2"/>
    <property type="match status" value="1"/>
</dbReference>
<dbReference type="Pfam" id="PF02965">
    <property type="entry name" value="Met_synt_B12"/>
    <property type="match status" value="1"/>
</dbReference>
<dbReference type="Pfam" id="PF00809">
    <property type="entry name" value="Pterin_bind"/>
    <property type="match status" value="1"/>
</dbReference>
<dbReference type="Pfam" id="PF02574">
    <property type="entry name" value="S-methyl_trans"/>
    <property type="match status" value="1"/>
</dbReference>
<dbReference type="PIRSF" id="PIRSF000381">
    <property type="entry name" value="MetH"/>
    <property type="match status" value="1"/>
</dbReference>
<dbReference type="SMART" id="SM01018">
    <property type="entry name" value="B12-binding_2"/>
    <property type="match status" value="1"/>
</dbReference>
<dbReference type="SUPFAM" id="SSF52242">
    <property type="entry name" value="Cobalamin (vitamin B12)-binding domain"/>
    <property type="match status" value="1"/>
</dbReference>
<dbReference type="SUPFAM" id="SSF51717">
    <property type="entry name" value="Dihydropteroate synthetase-like"/>
    <property type="match status" value="1"/>
</dbReference>
<dbReference type="SUPFAM" id="SSF82282">
    <property type="entry name" value="Homocysteine S-methyltransferase"/>
    <property type="match status" value="1"/>
</dbReference>
<dbReference type="SUPFAM" id="SSF56507">
    <property type="entry name" value="Methionine synthase activation domain-like"/>
    <property type="match status" value="1"/>
</dbReference>
<dbReference type="SUPFAM" id="SSF47644">
    <property type="entry name" value="Methionine synthase domain"/>
    <property type="match status" value="1"/>
</dbReference>
<dbReference type="PROSITE" id="PS50974">
    <property type="entry name" value="ADOMET_ACTIVATION"/>
    <property type="match status" value="1"/>
</dbReference>
<dbReference type="PROSITE" id="PS51332">
    <property type="entry name" value="B12_BINDING"/>
    <property type="match status" value="1"/>
</dbReference>
<dbReference type="PROSITE" id="PS51337">
    <property type="entry name" value="B12_BINDING_NTER"/>
    <property type="match status" value="1"/>
</dbReference>
<dbReference type="PROSITE" id="PS50970">
    <property type="entry name" value="HCY"/>
    <property type="match status" value="1"/>
</dbReference>
<dbReference type="PROSITE" id="PS50972">
    <property type="entry name" value="PTERIN_BINDING"/>
    <property type="match status" value="1"/>
</dbReference>
<organism>
    <name type="scientific">Homo sapiens</name>
    <name type="common">Human</name>
    <dbReference type="NCBI Taxonomy" id="9606"/>
    <lineage>
        <taxon>Eukaryota</taxon>
        <taxon>Metazoa</taxon>
        <taxon>Chordata</taxon>
        <taxon>Craniata</taxon>
        <taxon>Vertebrata</taxon>
        <taxon>Euteleostomi</taxon>
        <taxon>Mammalia</taxon>
        <taxon>Eutheria</taxon>
        <taxon>Euarchontoglires</taxon>
        <taxon>Primates</taxon>
        <taxon>Haplorrhini</taxon>
        <taxon>Catarrhini</taxon>
        <taxon>Hominidae</taxon>
        <taxon>Homo</taxon>
    </lineage>
</organism>
<reference key="1">
    <citation type="journal article" date="1996" name="Hum. Mol. Genet.">
        <title>Human methionine synthase: cDNA cloning and identification of mutations in patients of the cblG complementation group of folate/cobalamin disorders.</title>
        <authorList>
            <person name="Leclerc D."/>
            <person name="Campeau E."/>
            <person name="Goyette P."/>
            <person name="Adjalla C.E."/>
            <person name="Christensen B."/>
            <person name="Ross M."/>
            <person name="Eydoux P."/>
            <person name="Rosenblatt D.S."/>
            <person name="Rozen R."/>
            <person name="Gravel R.A."/>
        </authorList>
    </citation>
    <scope>NUCLEOTIDE SEQUENCE [MRNA] (ISOFORM 1)</scope>
    <scope>TISSUE SPECIFICITY</scope>
    <scope>VARIANTS HMAG ILE-881 DEL AND ASP-920</scope>
    <source>
        <tissue>Fibroblast</tissue>
    </source>
</reference>
<reference key="2">
    <citation type="journal article" date="1996" name="Hum. Mol. Genet.">
        <title>Cloning, mapping and RNA analysis of the human methionine synthase gene.</title>
        <authorList>
            <person name="Li Y.N."/>
            <person name="Gulati S."/>
            <person name="Baker P.J."/>
            <person name="Brody L.C."/>
            <person name="Banerjee R."/>
            <person name="Kruger W.D."/>
        </authorList>
    </citation>
    <scope>NUCLEOTIDE SEQUENCE [MRNA] (ISOFORM 1)</scope>
    <scope>TISSUE SPECIFICITY</scope>
    <source>
        <tissue>Liver</tissue>
    </source>
</reference>
<reference key="3">
    <citation type="journal article" date="1997" name="J. Biol. Chem.">
        <title>Human methionine synthase. cDNA cloning, gene localization, and expression.</title>
        <authorList>
            <person name="Chen L.H."/>
            <person name="Liu M.-L."/>
            <person name="Hwang H.-Y."/>
            <person name="Chen L.-S."/>
            <person name="Korenberg J."/>
            <person name="Shane B."/>
        </authorList>
    </citation>
    <scope>NUCLEOTIDE SEQUENCE [MRNA] (ISOFORM 1)</scope>
    <scope>VARIANTS TYR-255 AND GLY-919</scope>
    <source>
        <tissue>Fetal liver</tissue>
    </source>
</reference>
<reference key="4">
    <citation type="journal article" date="2006" name="Nature">
        <title>The DNA sequence and biological annotation of human chromosome 1.</title>
        <authorList>
            <person name="Gregory S.G."/>
            <person name="Barlow K.F."/>
            <person name="McLay K.E."/>
            <person name="Kaul R."/>
            <person name="Swarbreck D."/>
            <person name="Dunham A."/>
            <person name="Scott C.E."/>
            <person name="Howe K.L."/>
            <person name="Woodfine K."/>
            <person name="Spencer C.C.A."/>
            <person name="Jones M.C."/>
            <person name="Gillson C."/>
            <person name="Searle S."/>
            <person name="Zhou Y."/>
            <person name="Kokocinski F."/>
            <person name="McDonald L."/>
            <person name="Evans R."/>
            <person name="Phillips K."/>
            <person name="Atkinson A."/>
            <person name="Cooper R."/>
            <person name="Jones C."/>
            <person name="Hall R.E."/>
            <person name="Andrews T.D."/>
            <person name="Lloyd C."/>
            <person name="Ainscough R."/>
            <person name="Almeida J.P."/>
            <person name="Ambrose K.D."/>
            <person name="Anderson F."/>
            <person name="Andrew R.W."/>
            <person name="Ashwell R.I.S."/>
            <person name="Aubin K."/>
            <person name="Babbage A.K."/>
            <person name="Bagguley C.L."/>
            <person name="Bailey J."/>
            <person name="Beasley H."/>
            <person name="Bethel G."/>
            <person name="Bird C.P."/>
            <person name="Bray-Allen S."/>
            <person name="Brown J.Y."/>
            <person name="Brown A.J."/>
            <person name="Buckley D."/>
            <person name="Burton J."/>
            <person name="Bye J."/>
            <person name="Carder C."/>
            <person name="Chapman J.C."/>
            <person name="Clark S.Y."/>
            <person name="Clarke G."/>
            <person name="Clee C."/>
            <person name="Cobley V."/>
            <person name="Collier R.E."/>
            <person name="Corby N."/>
            <person name="Coville G.J."/>
            <person name="Davies J."/>
            <person name="Deadman R."/>
            <person name="Dunn M."/>
            <person name="Earthrowl M."/>
            <person name="Ellington A.G."/>
            <person name="Errington H."/>
            <person name="Frankish A."/>
            <person name="Frankland J."/>
            <person name="French L."/>
            <person name="Garner P."/>
            <person name="Garnett J."/>
            <person name="Gay L."/>
            <person name="Ghori M.R.J."/>
            <person name="Gibson R."/>
            <person name="Gilby L.M."/>
            <person name="Gillett W."/>
            <person name="Glithero R.J."/>
            <person name="Grafham D.V."/>
            <person name="Griffiths C."/>
            <person name="Griffiths-Jones S."/>
            <person name="Grocock R."/>
            <person name="Hammond S."/>
            <person name="Harrison E.S.I."/>
            <person name="Hart E."/>
            <person name="Haugen E."/>
            <person name="Heath P.D."/>
            <person name="Holmes S."/>
            <person name="Holt K."/>
            <person name="Howden P.J."/>
            <person name="Hunt A.R."/>
            <person name="Hunt S.E."/>
            <person name="Hunter G."/>
            <person name="Isherwood J."/>
            <person name="James R."/>
            <person name="Johnson C."/>
            <person name="Johnson D."/>
            <person name="Joy A."/>
            <person name="Kay M."/>
            <person name="Kershaw J.K."/>
            <person name="Kibukawa M."/>
            <person name="Kimberley A.M."/>
            <person name="King A."/>
            <person name="Knights A.J."/>
            <person name="Lad H."/>
            <person name="Laird G."/>
            <person name="Lawlor S."/>
            <person name="Leongamornlert D.A."/>
            <person name="Lloyd D.M."/>
            <person name="Loveland J."/>
            <person name="Lovell J."/>
            <person name="Lush M.J."/>
            <person name="Lyne R."/>
            <person name="Martin S."/>
            <person name="Mashreghi-Mohammadi M."/>
            <person name="Matthews L."/>
            <person name="Matthews N.S.W."/>
            <person name="McLaren S."/>
            <person name="Milne S."/>
            <person name="Mistry S."/>
            <person name="Moore M.J.F."/>
            <person name="Nickerson T."/>
            <person name="O'Dell C.N."/>
            <person name="Oliver K."/>
            <person name="Palmeiri A."/>
            <person name="Palmer S.A."/>
            <person name="Parker A."/>
            <person name="Patel D."/>
            <person name="Pearce A.V."/>
            <person name="Peck A.I."/>
            <person name="Pelan S."/>
            <person name="Phelps K."/>
            <person name="Phillimore B.J."/>
            <person name="Plumb R."/>
            <person name="Rajan J."/>
            <person name="Raymond C."/>
            <person name="Rouse G."/>
            <person name="Saenphimmachak C."/>
            <person name="Sehra H.K."/>
            <person name="Sheridan E."/>
            <person name="Shownkeen R."/>
            <person name="Sims S."/>
            <person name="Skuce C.D."/>
            <person name="Smith M."/>
            <person name="Steward C."/>
            <person name="Subramanian S."/>
            <person name="Sycamore N."/>
            <person name="Tracey A."/>
            <person name="Tromans A."/>
            <person name="Van Helmond Z."/>
            <person name="Wall M."/>
            <person name="Wallis J.M."/>
            <person name="White S."/>
            <person name="Whitehead S.L."/>
            <person name="Wilkinson J.E."/>
            <person name="Willey D.L."/>
            <person name="Williams H."/>
            <person name="Wilming L."/>
            <person name="Wray P.W."/>
            <person name="Wu Z."/>
            <person name="Coulson A."/>
            <person name="Vaudin M."/>
            <person name="Sulston J.E."/>
            <person name="Durbin R.M."/>
            <person name="Hubbard T."/>
            <person name="Wooster R."/>
            <person name="Dunham I."/>
            <person name="Carter N.P."/>
            <person name="McVean G."/>
            <person name="Ross M.T."/>
            <person name="Harrow J."/>
            <person name="Olson M.V."/>
            <person name="Beck S."/>
            <person name="Rogers J."/>
            <person name="Bentley D.R."/>
        </authorList>
    </citation>
    <scope>NUCLEOTIDE SEQUENCE [LARGE SCALE GENOMIC DNA]</scope>
</reference>
<reference key="5">
    <citation type="submission" date="2005-07" db="EMBL/GenBank/DDBJ databases">
        <authorList>
            <person name="Mural R.J."/>
            <person name="Istrail S."/>
            <person name="Sutton G.G."/>
            <person name="Florea L."/>
            <person name="Halpern A.L."/>
            <person name="Mobarry C.M."/>
            <person name="Lippert R."/>
            <person name="Walenz B."/>
            <person name="Shatkay H."/>
            <person name="Dew I."/>
            <person name="Miller J.R."/>
            <person name="Flanigan M.J."/>
            <person name="Edwards N.J."/>
            <person name="Bolanos R."/>
            <person name="Fasulo D."/>
            <person name="Halldorsson B.V."/>
            <person name="Hannenhalli S."/>
            <person name="Turner R."/>
            <person name="Yooseph S."/>
            <person name="Lu F."/>
            <person name="Nusskern D.R."/>
            <person name="Shue B.C."/>
            <person name="Zheng X.H."/>
            <person name="Zhong F."/>
            <person name="Delcher A.L."/>
            <person name="Huson D.H."/>
            <person name="Kravitz S.A."/>
            <person name="Mouchard L."/>
            <person name="Reinert K."/>
            <person name="Remington K.A."/>
            <person name="Clark A.G."/>
            <person name="Waterman M.S."/>
            <person name="Eichler E.E."/>
            <person name="Adams M.D."/>
            <person name="Hunkapiller M.W."/>
            <person name="Myers E.W."/>
            <person name="Venter J.C."/>
        </authorList>
    </citation>
    <scope>NUCLEOTIDE SEQUENCE [LARGE SCALE GENOMIC DNA]</scope>
</reference>
<reference key="6">
    <citation type="journal article" date="2004" name="Genome Res.">
        <title>The status, quality, and expansion of the NIH full-length cDNA project: the Mammalian Gene Collection (MGC).</title>
        <authorList>
            <consortium name="The MGC Project Team"/>
        </authorList>
    </citation>
    <scope>NUCLEOTIDE SEQUENCE [LARGE SCALE MRNA] (ISOFORMS 1 AND 2)</scope>
    <scope>VARIANT GLY-919</scope>
    <source>
        <tissue>Testis</tissue>
    </source>
</reference>
<reference key="7">
    <citation type="journal article" date="2006" name="Proc. Natl. Acad. Sci. U.S.A.">
        <title>Human methionine synthase reductase is a molecular chaperone for human methionine synthase.</title>
        <authorList>
            <person name="Yamada K."/>
            <person name="Gravel R.A."/>
            <person name="Toraya T."/>
            <person name="Matthews R.G."/>
        </authorList>
    </citation>
    <scope>FUNCTION</scope>
    <scope>CATALYTIC ACTIVITY</scope>
    <scope>INTERACTION WITH MTRR</scope>
</reference>
<reference key="8">
    <citation type="journal article" date="2011" name="BMC Syst. Biol.">
        <title>Initial characterization of the human central proteome.</title>
        <authorList>
            <person name="Burkard T.R."/>
            <person name="Planyavsky M."/>
            <person name="Kaupe I."/>
            <person name="Breitwieser F.P."/>
            <person name="Buerckstuemmer T."/>
            <person name="Bennett K.L."/>
            <person name="Superti-Furga G."/>
            <person name="Colinge J."/>
        </authorList>
    </citation>
    <scope>IDENTIFICATION BY MASS SPECTROMETRY [LARGE SCALE ANALYSIS]</scope>
</reference>
<reference key="9">
    <citation type="journal article" date="2017" name="Biochim. Biophys. Acta">
        <title>Methionine synthase and methionine synthase reductase interact with MMACHC and with MMADHC.</title>
        <authorList>
            <person name="Bassila C."/>
            <person name="Ghemrawi R."/>
            <person name="Flayac J."/>
            <person name="Froese D.S."/>
            <person name="Baumgartner M.R."/>
            <person name="Gueant J.L."/>
            <person name="Coelho D."/>
        </authorList>
    </citation>
    <scope>FUNCTION</scope>
    <scope>SUBCELLULAR LOCATION</scope>
    <scope>INTERACTION WITH MMACHC; MMADHC AND MTRR</scope>
</reference>
<reference key="10">
    <citation type="journal article" date="1996" name="Hum. Mol. Genet.">
        <title>Defects in human methionine synthase in cblG patients.</title>
        <authorList>
            <person name="Gulati S."/>
            <person name="Baker P.J."/>
            <person name="Li Y.N."/>
            <person name="Fowler B."/>
            <person name="Kruger W.D."/>
            <person name="Brody L.C."/>
            <person name="Banerjee R."/>
        </authorList>
    </citation>
    <scope>VARIANTS HMAG ILE-881 DEL AND LEU-1173</scope>
    <scope>VARIANT LYS-61</scope>
</reference>
<reference key="11">
    <citation type="journal article" date="2002" name="Am. J. Hum. Genet.">
        <title>Maternal genetic effects, exerted by genes involved in homocysteine remethylation, influence the risk of spina bifida.</title>
        <authorList>
            <person name="Doolin M.-T."/>
            <person name="Barbaux S."/>
            <person name="McDonnell M."/>
            <person name="Hoess K."/>
            <person name="Whitehead A.S."/>
            <person name="Mitchell L.E."/>
        </authorList>
    </citation>
    <scope>INVOLVEMENT IN SUSCEPTIBILITY TO NTDFS</scope>
    <scope>VARIANT GLY-919</scope>
</reference>
<reference key="12">
    <citation type="journal article" date="2005" name="Mol. Genet. Metab.">
        <title>Analysis of methionine synthase reductase polymorphisms for neural tube defects risk association.</title>
        <authorList>
            <person name="O'Leary V.B."/>
            <person name="Mills J.L."/>
            <person name="Pangilinan F."/>
            <person name="Kirke P.N."/>
            <person name="Cox C."/>
            <person name="Conley M."/>
            <person name="Weiler A."/>
            <person name="Peng K."/>
            <person name="Shane B."/>
            <person name="Scott J.M."/>
            <person name="Parle-McDermott A."/>
            <person name="Molloy A.M."/>
            <person name="Brody L.C."/>
        </authorList>
    </citation>
    <scope>VARIANT GLY-919</scope>
</reference>
<reference evidence="26" key="13">
    <citation type="submission" date="2013-10" db="PDB data bank">
        <title>Crystal structure of human 5-methyltetrahydrofolate-homocysteine methyltransferase, the homocysteine and folate binding domains.</title>
        <authorList>
            <person name="Vollmar M."/>
            <person name="Kiyani W."/>
            <person name="Krojer T."/>
            <person name="Goubin S."/>
            <person name="Burgess-Brown N."/>
            <person name="Von Delft F."/>
            <person name="Oppermann U."/>
            <person name="Edwards A."/>
            <person name="Arrowsmith C."/>
            <person name="Bountra C."/>
            <person name="Yue W.W."/>
        </authorList>
    </citation>
    <scope>X-RAY CRYSTALLOGRAPHY (2.70 ANGSTROMS) OF 16-657 IN COMPLEX WITH TETRAHYDROFOLATE</scope>
</reference>
<reference evidence="25" key="14">
    <citation type="journal article" date="2007" name="FEBS J.">
        <title>Crystal structure and solution characterization of the activation domain of human methionine synthase.</title>
        <authorList>
            <person name="Wolthers K.R."/>
            <person name="Toogood H.S."/>
            <person name="Jowitt T.A."/>
            <person name="Marshall K.R."/>
            <person name="Leys D."/>
            <person name="Scrutton N.S."/>
        </authorList>
    </citation>
    <scope>X-RAY CRYSTALLOGRAPHY (1.60 ANGSTROMS) OF 924-1265 OF MUTANT GLU-963/ASN-1071</scope>
    <scope>FUNCTION</scope>
    <scope>CATALYTIC ACTIVITY</scope>
    <scope>SUBUNIT</scope>
    <scope>INTERACTION WITH MTRR</scope>
    <scope>MUTAGENESIS OF ASP-963 AND LYS-1071</scope>
</reference>
<feature type="chain" id="PRO_0000204530" description="Methionine synthase">
    <location>
        <begin position="1"/>
        <end position="1265"/>
    </location>
</feature>
<feature type="domain" description="Hcy-binding" evidence="3">
    <location>
        <begin position="19"/>
        <end position="338"/>
    </location>
</feature>
<feature type="domain" description="Pterin-binding" evidence="4">
    <location>
        <begin position="371"/>
        <end position="632"/>
    </location>
</feature>
<feature type="domain" description="B12-binding N-terminal" evidence="7">
    <location>
        <begin position="662"/>
        <end position="759"/>
    </location>
</feature>
<feature type="domain" description="B12-binding" evidence="6">
    <location>
        <begin position="772"/>
        <end position="907"/>
    </location>
</feature>
<feature type="domain" description="AdoMet activation" evidence="5">
    <location>
        <begin position="923"/>
        <end position="1265"/>
    </location>
</feature>
<feature type="binding site" evidence="3">
    <location>
        <position position="260"/>
    </location>
    <ligand>
        <name>Zn(2+)</name>
        <dbReference type="ChEBI" id="CHEBI:29105"/>
    </ligand>
</feature>
<feature type="binding site" evidence="3">
    <location>
        <position position="323"/>
    </location>
    <ligand>
        <name>Zn(2+)</name>
        <dbReference type="ChEBI" id="CHEBI:29105"/>
    </ligand>
</feature>
<feature type="binding site" evidence="3">
    <location>
        <position position="324"/>
    </location>
    <ligand>
        <name>Zn(2+)</name>
        <dbReference type="ChEBI" id="CHEBI:29105"/>
    </ligand>
</feature>
<feature type="binding site" evidence="18 26">
    <location>
        <begin position="382"/>
        <end position="384"/>
    </location>
    <ligand>
        <name>(6S)-5,6,7,8-tetrahydrofolate</name>
        <dbReference type="ChEBI" id="CHEBI:57453"/>
    </ligand>
</feature>
<feature type="binding site" evidence="18 26">
    <location>
        <position position="449"/>
    </location>
    <ligand>
        <name>(6S)-5,6,7,8-tetrahydrofolate</name>
        <dbReference type="ChEBI" id="CHEBI:57453"/>
    </ligand>
</feature>
<feature type="binding site" evidence="18 26">
    <location>
        <position position="470"/>
    </location>
    <ligand>
        <name>(6S)-5,6,7,8-tetrahydrofolate</name>
        <dbReference type="ChEBI" id="CHEBI:57453"/>
    </ligand>
</feature>
<feature type="binding site" evidence="18 26">
    <location>
        <position position="537"/>
    </location>
    <ligand>
        <name>(6S)-5,6,7,8-tetrahydrofolate</name>
        <dbReference type="ChEBI" id="CHEBI:57453"/>
    </ligand>
</feature>
<feature type="binding site" evidence="18 26">
    <location>
        <position position="579"/>
    </location>
    <ligand>
        <name>(6S)-5,6,7,8-tetrahydrofolate</name>
        <dbReference type="ChEBI" id="CHEBI:57453"/>
    </ligand>
</feature>
<feature type="binding site" evidence="18 26">
    <location>
        <position position="585"/>
    </location>
    <ligand>
        <name>(6S)-5,6,7,8-tetrahydrofolate</name>
        <dbReference type="ChEBI" id="CHEBI:57453"/>
    </ligand>
</feature>
<feature type="binding site" evidence="18 26">
    <location>
        <position position="591"/>
    </location>
    <ligand>
        <name>(6S)-5,6,7,8-tetrahydrofolate</name>
        <dbReference type="ChEBI" id="CHEBI:57453"/>
    </ligand>
</feature>
<feature type="binding site" evidence="1">
    <location>
        <position position="709"/>
    </location>
    <ligand>
        <name>methylcob(III)alamin</name>
        <dbReference type="ChEBI" id="CHEBI:28115"/>
    </ligand>
</feature>
<feature type="binding site" evidence="1">
    <location>
        <begin position="782"/>
        <end position="786"/>
    </location>
    <ligand>
        <name>methylcob(III)alamin</name>
        <dbReference type="ChEBI" id="CHEBI:28115"/>
    </ligand>
</feature>
<feature type="binding site" description="axial binding residue" evidence="1">
    <location>
        <position position="785"/>
    </location>
    <ligand>
        <name>methylcob(III)alamin</name>
        <dbReference type="ChEBI" id="CHEBI:28115"/>
    </ligand>
    <ligandPart>
        <name>Co</name>
        <dbReference type="ChEBI" id="CHEBI:27638"/>
    </ligandPart>
</feature>
<feature type="binding site" evidence="1">
    <location>
        <position position="830"/>
    </location>
    <ligand>
        <name>methylcob(III)alamin</name>
        <dbReference type="ChEBI" id="CHEBI:28115"/>
    </ligand>
</feature>
<feature type="binding site" evidence="1">
    <location>
        <position position="834"/>
    </location>
    <ligand>
        <name>methylcob(III)alamin</name>
        <dbReference type="ChEBI" id="CHEBI:28115"/>
    </ligand>
</feature>
<feature type="binding site" evidence="1">
    <location>
        <position position="886"/>
    </location>
    <ligand>
        <name>methylcob(III)alamin</name>
        <dbReference type="ChEBI" id="CHEBI:28115"/>
    </ligand>
</feature>
<feature type="binding site" evidence="1">
    <location>
        <position position="974"/>
    </location>
    <ligand>
        <name>S-adenosyl-L-methionine</name>
        <dbReference type="ChEBI" id="CHEBI:59789"/>
    </ligand>
</feature>
<feature type="binding site" evidence="1">
    <location>
        <position position="1172"/>
    </location>
    <ligand>
        <name>S-adenosyl-L-methionine</name>
        <dbReference type="ChEBI" id="CHEBI:59789"/>
    </ligand>
</feature>
<feature type="binding site" evidence="1">
    <location>
        <begin position="1227"/>
        <end position="1228"/>
    </location>
    <ligand>
        <name>S-adenosyl-L-methionine</name>
        <dbReference type="ChEBI" id="CHEBI:59789"/>
    </ligand>
</feature>
<feature type="modified residue" description="Phosphothreonine" evidence="2">
    <location>
        <position position="1264"/>
    </location>
</feature>
<feature type="splice variant" id="VSP_057283" description="In isoform 2." evidence="19">
    <location>
        <begin position="682"/>
        <end position="732"/>
    </location>
</feature>
<feature type="sequence variant" id="VAR_050033" description="In dbSNP:rs12749581.">
    <original>R</original>
    <variation>Q</variation>
    <location>
        <position position="52"/>
    </location>
</feature>
<feature type="sequence variant" id="VAR_004326" evidence="15">
    <original>R</original>
    <variation>K</variation>
    <location>
        <position position="61"/>
    </location>
</feature>
<feature type="sequence variant" id="VAR_004327" description="In dbSNP:rs1140598." evidence="17">
    <original>C</original>
    <variation>Y</variation>
    <location>
        <position position="255"/>
    </location>
</feature>
<feature type="sequence variant" id="VAR_061338" description="In dbSNP:rs2229274.">
    <original>D</original>
    <variation>N</variation>
    <location>
        <position position="314"/>
    </location>
</feature>
<feature type="sequence variant" id="VAR_004328" description="In HMAG." evidence="15 16">
    <location>
        <position position="881"/>
    </location>
</feature>
<feature type="sequence variant" id="VAR_004329" description="In dbSNP:rs1805087." evidence="8 9 10 17">
    <original>D</original>
    <variation>G</variation>
    <location>
        <position position="919"/>
    </location>
</feature>
<feature type="sequence variant" id="VAR_004330" description="In HMAG; dbSNP:rs121913579." evidence="16">
    <original>H</original>
    <variation>D</variation>
    <location>
        <position position="920"/>
    </location>
</feature>
<feature type="sequence variant" id="VAR_004331" description="In HMAG; dbSNP:rs121913578." evidence="15">
    <original>P</original>
    <variation>L</variation>
    <location>
        <position position="1173"/>
    </location>
</feature>
<feature type="mutagenesis site" description="Decreases binding to MTRR; when associated with N-1071." evidence="12">
    <original>D</original>
    <variation>E</variation>
    <location>
        <position position="963"/>
    </location>
</feature>
<feature type="mutagenesis site" description="Decreases binding to MTRR; when associated with E-963." evidence="12">
    <original>K</original>
    <variation>N</variation>
    <location>
        <position position="1071"/>
    </location>
</feature>
<feature type="helix" evidence="28">
    <location>
        <begin position="18"/>
        <end position="28"/>
    </location>
</feature>
<feature type="helix" evidence="28">
    <location>
        <begin position="37"/>
        <end position="44"/>
    </location>
</feature>
<feature type="helix" evidence="28">
    <location>
        <begin position="49"/>
        <end position="51"/>
    </location>
</feature>
<feature type="helix" evidence="28">
    <location>
        <begin position="67"/>
        <end position="69"/>
    </location>
</feature>
<feature type="helix" evidence="28">
    <location>
        <begin position="70"/>
        <end position="73"/>
    </location>
</feature>
<feature type="helix" evidence="28">
    <location>
        <begin position="75"/>
        <end position="87"/>
    </location>
</feature>
<feature type="strand" evidence="28">
    <location>
        <begin position="92"/>
        <end position="94"/>
    </location>
</feature>
<feature type="helix" evidence="28">
    <location>
        <begin position="102"/>
        <end position="105"/>
    </location>
</feature>
<feature type="helix" evidence="28">
    <location>
        <begin position="106"/>
        <end position="108"/>
    </location>
</feature>
<feature type="helix" evidence="28">
    <location>
        <begin position="111"/>
        <end position="113"/>
    </location>
</feature>
<feature type="helix" evidence="28">
    <location>
        <begin position="114"/>
        <end position="136"/>
    </location>
</feature>
<feature type="strand" evidence="28">
    <location>
        <begin position="141"/>
        <end position="146"/>
    </location>
</feature>
<feature type="strand" evidence="28">
    <location>
        <begin position="153"/>
        <end position="155"/>
    </location>
</feature>
<feature type="strand" evidence="28">
    <location>
        <begin position="159"/>
        <end position="161"/>
    </location>
</feature>
<feature type="helix" evidence="28">
    <location>
        <begin position="169"/>
        <end position="185"/>
    </location>
</feature>
<feature type="strand" evidence="28">
    <location>
        <begin position="189"/>
        <end position="198"/>
    </location>
</feature>
<feature type="helix" evidence="28">
    <location>
        <begin position="199"/>
        <end position="213"/>
    </location>
</feature>
<feature type="turn" evidence="28">
    <location>
        <begin position="214"/>
        <end position="216"/>
    </location>
</feature>
<feature type="strand" evidence="28">
    <location>
        <begin position="222"/>
        <end position="226"/>
    </location>
</feature>
<feature type="helix" evidence="28">
    <location>
        <begin position="241"/>
        <end position="248"/>
    </location>
</feature>
<feature type="helix" evidence="28">
    <location>
        <begin position="249"/>
        <end position="251"/>
    </location>
</feature>
<feature type="strand" evidence="28">
    <location>
        <begin position="254"/>
        <end position="263"/>
    </location>
</feature>
<feature type="turn" evidence="28">
    <location>
        <begin position="264"/>
        <end position="267"/>
    </location>
</feature>
<feature type="helix" evidence="28">
    <location>
        <begin position="268"/>
        <end position="275"/>
    </location>
</feature>
<feature type="strand" evidence="28">
    <location>
        <begin position="279"/>
        <end position="287"/>
    </location>
</feature>
<feature type="strand" evidence="28">
    <location>
        <begin position="318"/>
        <end position="320"/>
    </location>
</feature>
<feature type="helix" evidence="28">
    <location>
        <begin position="328"/>
        <end position="338"/>
    </location>
</feature>
<feature type="turn" evidence="28">
    <location>
        <begin position="348"/>
        <end position="353"/>
    </location>
</feature>
<feature type="strand" evidence="28">
    <location>
        <begin position="355"/>
        <end position="365"/>
    </location>
</feature>
<feature type="strand" evidence="28">
    <location>
        <begin position="372"/>
        <end position="375"/>
    </location>
</feature>
<feature type="turn" evidence="28">
    <location>
        <begin position="380"/>
        <end position="382"/>
    </location>
</feature>
<feature type="helix" evidence="28">
    <location>
        <begin position="384"/>
        <end position="391"/>
    </location>
</feature>
<feature type="helix" evidence="28">
    <location>
        <begin position="395"/>
        <end position="407"/>
    </location>
</feature>
<feature type="strand" evidence="28">
    <location>
        <begin position="411"/>
        <end position="416"/>
    </location>
</feature>
<feature type="helix" evidence="28">
    <location>
        <begin position="424"/>
        <end position="437"/>
    </location>
</feature>
<feature type="helix" evidence="28">
    <location>
        <begin position="439"/>
        <end position="442"/>
    </location>
</feature>
<feature type="strand" evidence="28">
    <location>
        <begin position="446"/>
        <end position="449"/>
    </location>
</feature>
<feature type="helix" evidence="28">
    <location>
        <begin position="453"/>
        <end position="462"/>
    </location>
</feature>
<feature type="strand" evidence="28">
    <location>
        <begin position="468"/>
        <end position="472"/>
    </location>
</feature>
<feature type="helix" evidence="28">
    <location>
        <begin position="478"/>
        <end position="491"/>
    </location>
</feature>
<feature type="strand" evidence="28">
    <location>
        <begin position="494"/>
        <end position="501"/>
    </location>
</feature>
<feature type="helix" evidence="28">
    <location>
        <begin position="509"/>
        <end position="527"/>
    </location>
</feature>
<feature type="helix" evidence="28">
    <location>
        <begin position="531"/>
        <end position="533"/>
    </location>
</feature>
<feature type="strand" evidence="28">
    <location>
        <begin position="534"/>
        <end position="537"/>
    </location>
</feature>
<feature type="helix" evidence="28">
    <location>
        <begin position="548"/>
        <end position="552"/>
    </location>
</feature>
<feature type="helix" evidence="28">
    <location>
        <begin position="553"/>
        <end position="567"/>
    </location>
</feature>
<feature type="helix" evidence="28">
    <location>
        <begin position="577"/>
        <end position="584"/>
    </location>
</feature>
<feature type="helix" evidence="28">
    <location>
        <begin position="588"/>
        <end position="605"/>
    </location>
</feature>
<feature type="strand" evidence="28">
    <location>
        <begin position="609"/>
        <end position="612"/>
    </location>
</feature>
<feature type="helix" evidence="28">
    <location>
        <begin position="620"/>
        <end position="622"/>
    </location>
</feature>
<feature type="helix" evidence="28">
    <location>
        <begin position="625"/>
        <end position="635"/>
    </location>
</feature>
<feature type="helix" evidence="28">
    <location>
        <begin position="642"/>
        <end position="648"/>
    </location>
</feature>
<feature type="helix" evidence="27">
    <location>
        <begin position="932"/>
        <end position="937"/>
    </location>
</feature>
<feature type="helix" evidence="27">
    <location>
        <begin position="944"/>
        <end position="946"/>
    </location>
</feature>
<feature type="strand" evidence="27">
    <location>
        <begin position="956"/>
        <end position="962"/>
    </location>
</feature>
<feature type="helix" evidence="27">
    <location>
        <begin position="966"/>
        <end position="970"/>
    </location>
</feature>
<feature type="helix" evidence="27">
    <location>
        <begin position="976"/>
        <end position="987"/>
    </location>
</feature>
<feature type="helix" evidence="27">
    <location>
        <begin position="995"/>
        <end position="998"/>
    </location>
</feature>
<feature type="helix" evidence="27">
    <location>
        <begin position="1005"/>
        <end position="1022"/>
    </location>
</feature>
<feature type="strand" evidence="27">
    <location>
        <begin position="1026"/>
        <end position="1040"/>
    </location>
</feature>
<feature type="strand" evidence="27">
    <location>
        <begin position="1043"/>
        <end position="1046"/>
    </location>
</feature>
<feature type="helix" evidence="27">
    <location>
        <begin position="1053"/>
        <end position="1055"/>
    </location>
</feature>
<feature type="strand" evidence="27">
    <location>
        <begin position="1059"/>
        <end position="1063"/>
    </location>
</feature>
<feature type="helix" evidence="27">
    <location>
        <begin position="1082"/>
        <end position="1085"/>
    </location>
</feature>
<feature type="helix" evidence="27">
    <location>
        <begin position="1089"/>
        <end position="1091"/>
    </location>
</feature>
<feature type="strand" evidence="27">
    <location>
        <begin position="1095"/>
        <end position="1106"/>
    </location>
</feature>
<feature type="helix" evidence="27">
    <location>
        <begin position="1107"/>
        <end position="1116"/>
    </location>
</feature>
<feature type="helix" evidence="27">
    <location>
        <begin position="1120"/>
        <end position="1147"/>
    </location>
</feature>
<feature type="turn" evidence="27">
    <location>
        <begin position="1152"/>
        <end position="1155"/>
    </location>
</feature>
<feature type="helix" evidence="27">
    <location>
        <begin position="1160"/>
        <end position="1164"/>
    </location>
</feature>
<feature type="strand" evidence="27">
    <location>
        <begin position="1168"/>
        <end position="1171"/>
    </location>
</feature>
<feature type="helix" evidence="27">
    <location>
        <begin position="1185"/>
        <end position="1192"/>
    </location>
</feature>
<feature type="helix" evidence="27">
    <location>
        <begin position="1195"/>
        <end position="1199"/>
    </location>
</feature>
<feature type="strand" evidence="27">
    <location>
        <begin position="1209"/>
        <end position="1220"/>
    </location>
</feature>
<feature type="helix" evidence="27">
    <location>
        <begin position="1235"/>
        <end position="1245"/>
    </location>
</feature>
<feature type="helix" evidence="27">
    <location>
        <begin position="1249"/>
        <end position="1255"/>
    </location>
</feature>
<feature type="helix" evidence="27">
    <location>
        <begin position="1257"/>
        <end position="1259"/>
    </location>
</feature>